<proteinExistence type="evidence at protein level"/>
<organism>
    <name type="scientific">Serratia proteamaculans (strain 568)</name>
    <dbReference type="NCBI Taxonomy" id="399741"/>
    <lineage>
        <taxon>Bacteria</taxon>
        <taxon>Pseudomonadati</taxon>
        <taxon>Pseudomonadota</taxon>
        <taxon>Gammaproteobacteria</taxon>
        <taxon>Enterobacterales</taxon>
        <taxon>Yersiniaceae</taxon>
        <taxon>Serratia</taxon>
    </lineage>
</organism>
<keyword id="KW-0002">3D-structure</keyword>
<keyword id="KW-0456">Lyase</keyword>
<accession>A8GBZ7</accession>
<gene>
    <name evidence="1" type="primary">cynS</name>
    <name type="ordered locus">Spro_1533</name>
</gene>
<reference key="1">
    <citation type="submission" date="2007-09" db="EMBL/GenBank/DDBJ databases">
        <title>Complete sequence of chromosome of Serratia proteamaculans 568.</title>
        <authorList>
            <consortium name="US DOE Joint Genome Institute"/>
            <person name="Copeland A."/>
            <person name="Lucas S."/>
            <person name="Lapidus A."/>
            <person name="Barry K."/>
            <person name="Glavina del Rio T."/>
            <person name="Dalin E."/>
            <person name="Tice H."/>
            <person name="Pitluck S."/>
            <person name="Chain P."/>
            <person name="Malfatti S."/>
            <person name="Shin M."/>
            <person name="Vergez L."/>
            <person name="Schmutz J."/>
            <person name="Larimer F."/>
            <person name="Land M."/>
            <person name="Hauser L."/>
            <person name="Kyrpides N."/>
            <person name="Kim E."/>
            <person name="Taghavi S."/>
            <person name="Newman L."/>
            <person name="Vangronsveld J."/>
            <person name="van der Lelie D."/>
            <person name="Richardson P."/>
        </authorList>
    </citation>
    <scope>NUCLEOTIDE SEQUENCE [LARGE SCALE GENOMIC DNA]</scope>
    <source>
        <strain>568</strain>
    </source>
</reference>
<protein>
    <recommendedName>
        <fullName evidence="1">Cyanate hydratase</fullName>
        <shortName evidence="1">Cyanase</shortName>
        <ecNumber evidence="1">4.2.1.104</ecNumber>
    </recommendedName>
    <alternativeName>
        <fullName evidence="1">Cyanate hydrolase</fullName>
    </alternativeName>
    <alternativeName>
        <fullName evidence="1">Cyanate lyase</fullName>
    </alternativeName>
</protein>
<feature type="chain" id="PRO_1000061028" description="Cyanate hydratase">
    <location>
        <begin position="1"/>
        <end position="156"/>
    </location>
</feature>
<feature type="active site" evidence="1">
    <location>
        <position position="96"/>
    </location>
</feature>
<feature type="active site" evidence="1">
    <location>
        <position position="99"/>
    </location>
</feature>
<feature type="active site" evidence="1">
    <location>
        <position position="122"/>
    </location>
</feature>
<feature type="strand" evidence="3">
    <location>
        <begin position="6"/>
        <end position="8"/>
    </location>
</feature>
<feature type="helix" evidence="3">
    <location>
        <begin position="9"/>
        <end position="25"/>
    </location>
</feature>
<feature type="helix" evidence="3">
    <location>
        <begin position="29"/>
        <end position="32"/>
    </location>
</feature>
<feature type="turn" evidence="3">
    <location>
        <begin position="33"/>
        <end position="35"/>
    </location>
</feature>
<feature type="strand" evidence="2">
    <location>
        <begin position="36"/>
        <end position="38"/>
    </location>
</feature>
<feature type="helix" evidence="3">
    <location>
        <begin position="40"/>
        <end position="47"/>
    </location>
</feature>
<feature type="helix" evidence="3">
    <location>
        <begin position="55"/>
        <end position="65"/>
    </location>
</feature>
<feature type="helix" evidence="3">
    <location>
        <begin position="69"/>
        <end position="75"/>
    </location>
</feature>
<feature type="helix" evidence="3">
    <location>
        <begin position="92"/>
        <end position="115"/>
    </location>
</feature>
<feature type="strand" evidence="3">
    <location>
        <begin position="118"/>
        <end position="134"/>
    </location>
</feature>
<feature type="strand" evidence="3">
    <location>
        <begin position="138"/>
        <end position="152"/>
    </location>
</feature>
<evidence type="ECO:0000255" key="1">
    <source>
        <dbReference type="HAMAP-Rule" id="MF_00535"/>
    </source>
</evidence>
<evidence type="ECO:0007829" key="2">
    <source>
        <dbReference type="PDB" id="4Y42"/>
    </source>
</evidence>
<evidence type="ECO:0007829" key="3">
    <source>
        <dbReference type="PDB" id="6B6M"/>
    </source>
</evidence>
<dbReference type="EC" id="4.2.1.104" evidence="1"/>
<dbReference type="EMBL" id="CP000826">
    <property type="protein sequence ID" value="ABV40637.1"/>
    <property type="molecule type" value="Genomic_DNA"/>
</dbReference>
<dbReference type="PDB" id="4Y42">
    <property type="method" value="X-ray"/>
    <property type="resolution" value="2.09 A"/>
    <property type="chains" value="A/B/C/D/E/F/G/H/I/J=1-156"/>
</dbReference>
<dbReference type="PDB" id="6B6M">
    <property type="method" value="X-ray"/>
    <property type="resolution" value="1.91 A"/>
    <property type="chains" value="A/B/C/D/E=1-156"/>
</dbReference>
<dbReference type="PDBsum" id="4Y42"/>
<dbReference type="PDBsum" id="6B6M"/>
<dbReference type="SMR" id="A8GBZ7"/>
<dbReference type="STRING" id="399741.Spro_1533"/>
<dbReference type="KEGG" id="spe:Spro_1533"/>
<dbReference type="eggNOG" id="COG1513">
    <property type="taxonomic scope" value="Bacteria"/>
</dbReference>
<dbReference type="HOGENOM" id="CLU_103452_1_1_6"/>
<dbReference type="OrthoDB" id="9785870at2"/>
<dbReference type="BRENDA" id="4.2.1.104">
    <property type="organism ID" value="8756"/>
</dbReference>
<dbReference type="EvolutionaryTrace" id="A8GBZ7"/>
<dbReference type="GO" id="GO:0008824">
    <property type="term" value="F:cyanate hydratase activity"/>
    <property type="evidence" value="ECO:0007669"/>
    <property type="project" value="UniProtKB-UniRule"/>
</dbReference>
<dbReference type="GO" id="GO:0003677">
    <property type="term" value="F:DNA binding"/>
    <property type="evidence" value="ECO:0007669"/>
    <property type="project" value="InterPro"/>
</dbReference>
<dbReference type="GO" id="GO:0009439">
    <property type="term" value="P:cyanate metabolic process"/>
    <property type="evidence" value="ECO:0007669"/>
    <property type="project" value="UniProtKB-UniRule"/>
</dbReference>
<dbReference type="CDD" id="cd00559">
    <property type="entry name" value="Cyanase_C"/>
    <property type="match status" value="1"/>
</dbReference>
<dbReference type="Gene3D" id="3.30.1160.10">
    <property type="entry name" value="Cyanate lyase, C-terminal domain"/>
    <property type="match status" value="1"/>
</dbReference>
<dbReference type="Gene3D" id="1.10.260.40">
    <property type="entry name" value="lambda repressor-like DNA-binding domains"/>
    <property type="match status" value="1"/>
</dbReference>
<dbReference type="HAMAP" id="MF_00535">
    <property type="entry name" value="Cyanate_hydrat"/>
    <property type="match status" value="1"/>
</dbReference>
<dbReference type="InterPro" id="IPR008076">
    <property type="entry name" value="Cyanase"/>
</dbReference>
<dbReference type="InterPro" id="IPR003712">
    <property type="entry name" value="Cyanate_lyase_C"/>
</dbReference>
<dbReference type="InterPro" id="IPR036581">
    <property type="entry name" value="Cyanate_lyase_C_sf"/>
</dbReference>
<dbReference type="InterPro" id="IPR048564">
    <property type="entry name" value="CYNS_N"/>
</dbReference>
<dbReference type="InterPro" id="IPR010982">
    <property type="entry name" value="Lambda_DNA-bd_dom_sf"/>
</dbReference>
<dbReference type="NCBIfam" id="TIGR00673">
    <property type="entry name" value="cynS"/>
    <property type="match status" value="1"/>
</dbReference>
<dbReference type="NCBIfam" id="NF002773">
    <property type="entry name" value="PRK02866.1"/>
    <property type="match status" value="1"/>
</dbReference>
<dbReference type="PANTHER" id="PTHR34186">
    <property type="entry name" value="CYANATE HYDRATASE"/>
    <property type="match status" value="1"/>
</dbReference>
<dbReference type="PANTHER" id="PTHR34186:SF2">
    <property type="entry name" value="CYANATE HYDRATASE"/>
    <property type="match status" value="1"/>
</dbReference>
<dbReference type="Pfam" id="PF02560">
    <property type="entry name" value="Cyanate_lyase"/>
    <property type="match status" value="1"/>
</dbReference>
<dbReference type="Pfam" id="PF21291">
    <property type="entry name" value="CYNS_N"/>
    <property type="match status" value="1"/>
</dbReference>
<dbReference type="PIRSF" id="PIRSF001263">
    <property type="entry name" value="Cyanate_hydratas"/>
    <property type="match status" value="1"/>
</dbReference>
<dbReference type="PRINTS" id="PR01693">
    <property type="entry name" value="CYANASE"/>
</dbReference>
<dbReference type="SMART" id="SM01116">
    <property type="entry name" value="Cyanate_lyase"/>
    <property type="match status" value="1"/>
</dbReference>
<dbReference type="SUPFAM" id="SSF55234">
    <property type="entry name" value="Cyanase C-terminal domain"/>
    <property type="match status" value="1"/>
</dbReference>
<dbReference type="SUPFAM" id="SSF47413">
    <property type="entry name" value="lambda repressor-like DNA-binding domains"/>
    <property type="match status" value="1"/>
</dbReference>
<comment type="function">
    <text evidence="1">Catalyzes the reaction of cyanate with bicarbonate to produce ammonia and carbon dioxide.</text>
</comment>
<comment type="catalytic activity">
    <reaction evidence="1">
        <text>cyanate + hydrogencarbonate + 3 H(+) = NH4(+) + 2 CO2</text>
        <dbReference type="Rhea" id="RHEA:11120"/>
        <dbReference type="ChEBI" id="CHEBI:15378"/>
        <dbReference type="ChEBI" id="CHEBI:16526"/>
        <dbReference type="ChEBI" id="CHEBI:17544"/>
        <dbReference type="ChEBI" id="CHEBI:28938"/>
        <dbReference type="ChEBI" id="CHEBI:29195"/>
        <dbReference type="EC" id="4.2.1.104"/>
    </reaction>
</comment>
<comment type="similarity">
    <text evidence="1">Belongs to the cyanase family.</text>
</comment>
<name>CYNS_SERP5</name>
<sequence>MTQSLHYSSPRETLTDTIMMAKIRKNLTFEAINQGTGLSLAFVTAALLGQHPLPEQAARVVAEKLDLDEDAIRLLQTIPLRGSIPGGVPTDPTIYRFYEMVQIYGSTLKALVHEQFGDGIISAINFKLDIKKVPDPDGGERAVITLDGKYLPTKPF</sequence>